<proteinExistence type="inferred from homology"/>
<gene>
    <name type="primary">tal</name>
    <name type="ordered locus">MT1495</name>
</gene>
<evidence type="ECO:0000250" key="1"/>
<evidence type="ECO:0000305" key="2"/>
<feature type="chain" id="PRO_0000428432" description="Transaldolase">
    <location>
        <begin position="1"/>
        <end position="373"/>
    </location>
</feature>
<feature type="active site" description="Schiff-base intermediate with substrate" evidence="1">
    <location>
        <position position="143"/>
    </location>
</feature>
<keyword id="KW-0963">Cytoplasm</keyword>
<keyword id="KW-0570">Pentose shunt</keyword>
<keyword id="KW-1185">Reference proteome</keyword>
<keyword id="KW-0704">Schiff base</keyword>
<keyword id="KW-0808">Transferase</keyword>
<sequence length="373" mass="40691">MTAQNPNLAALSAAGVSVWLDDLSRDRLRSGNLQELIDTKSVVGVTTNPSIFQKALSEGHTYDAQIAELAARGADVDATIRTVTTDDVRSACDVLVPQWEDSDGVDGRVSIEVDPRLAHETEKTIQQAIELWKIVDRPNLFIKIPATKAGLPAISAVLAEGISVNVTLIFSVQRYREVMDAYLTGMEKARQAGHSLSKIHSVASFFVSRVDTEIDKRLDRIGSRQALELRGQAGVANARLAYAAYREVFEDSDRYRSLKVDGARVQRPLWASTGVKNPDYSDTLYVTELVAPHTVNTMPEKTIDAVADHGVIQGDTVTGTASDAQAVFDQLGAIGIDLTDVFAVLEEEGVRKFEASWNELLQETRAHLDTAAQ</sequence>
<organism>
    <name type="scientific">Mycobacterium tuberculosis (strain CDC 1551 / Oshkosh)</name>
    <dbReference type="NCBI Taxonomy" id="83331"/>
    <lineage>
        <taxon>Bacteria</taxon>
        <taxon>Bacillati</taxon>
        <taxon>Actinomycetota</taxon>
        <taxon>Actinomycetes</taxon>
        <taxon>Mycobacteriales</taxon>
        <taxon>Mycobacteriaceae</taxon>
        <taxon>Mycobacterium</taxon>
        <taxon>Mycobacterium tuberculosis complex</taxon>
    </lineage>
</organism>
<reference key="1">
    <citation type="journal article" date="2002" name="J. Bacteriol.">
        <title>Whole-genome comparison of Mycobacterium tuberculosis clinical and laboratory strains.</title>
        <authorList>
            <person name="Fleischmann R.D."/>
            <person name="Alland D."/>
            <person name="Eisen J.A."/>
            <person name="Carpenter L."/>
            <person name="White O."/>
            <person name="Peterson J.D."/>
            <person name="DeBoy R.T."/>
            <person name="Dodson R.J."/>
            <person name="Gwinn M.L."/>
            <person name="Haft D.H."/>
            <person name="Hickey E.K."/>
            <person name="Kolonay J.F."/>
            <person name="Nelson W.C."/>
            <person name="Umayam L.A."/>
            <person name="Ermolaeva M.D."/>
            <person name="Salzberg S.L."/>
            <person name="Delcher A."/>
            <person name="Utterback T.R."/>
            <person name="Weidman J.F."/>
            <person name="Khouri H.M."/>
            <person name="Gill J."/>
            <person name="Mikula A."/>
            <person name="Bishai W."/>
            <person name="Jacobs W.R. Jr."/>
            <person name="Venter J.C."/>
            <person name="Fraser C.M."/>
        </authorList>
    </citation>
    <scope>NUCLEOTIDE SEQUENCE [LARGE SCALE GENOMIC DNA]</scope>
    <source>
        <strain>CDC 1551 / Oshkosh</strain>
    </source>
</reference>
<protein>
    <recommendedName>
        <fullName>Transaldolase</fullName>
        <ecNumber>2.2.1.2</ecNumber>
    </recommendedName>
</protein>
<name>TAL_MYCTO</name>
<accession>P9WG32</accession>
<accession>L0T6W3</accession>
<accession>O06812</accession>
<dbReference type="EC" id="2.2.1.2"/>
<dbReference type="EMBL" id="AE000516">
    <property type="protein sequence ID" value="AAK45758.1"/>
    <property type="molecule type" value="Genomic_DNA"/>
</dbReference>
<dbReference type="PIR" id="C70917">
    <property type="entry name" value="C70917"/>
</dbReference>
<dbReference type="RefSeq" id="WP_003407447.1">
    <property type="nucleotide sequence ID" value="NZ_KK341227.1"/>
</dbReference>
<dbReference type="SMR" id="P9WG32"/>
<dbReference type="KEGG" id="mtc:MT1495"/>
<dbReference type="PATRIC" id="fig|83331.31.peg.1607"/>
<dbReference type="HOGENOM" id="CLU_050771_1_0_11"/>
<dbReference type="UniPathway" id="UPA00115">
    <property type="reaction ID" value="UER00414"/>
</dbReference>
<dbReference type="Proteomes" id="UP000001020">
    <property type="component" value="Chromosome"/>
</dbReference>
<dbReference type="GO" id="GO:0005737">
    <property type="term" value="C:cytoplasm"/>
    <property type="evidence" value="ECO:0007669"/>
    <property type="project" value="UniProtKB-SubCell"/>
</dbReference>
<dbReference type="GO" id="GO:0004801">
    <property type="term" value="F:transaldolase activity"/>
    <property type="evidence" value="ECO:0007669"/>
    <property type="project" value="UniProtKB-UniRule"/>
</dbReference>
<dbReference type="GO" id="GO:0005975">
    <property type="term" value="P:carbohydrate metabolic process"/>
    <property type="evidence" value="ECO:0007669"/>
    <property type="project" value="InterPro"/>
</dbReference>
<dbReference type="GO" id="GO:0006098">
    <property type="term" value="P:pentose-phosphate shunt"/>
    <property type="evidence" value="ECO:0007669"/>
    <property type="project" value="UniProtKB-UniRule"/>
</dbReference>
<dbReference type="CDD" id="cd00955">
    <property type="entry name" value="Transaldolase_like"/>
    <property type="match status" value="1"/>
</dbReference>
<dbReference type="FunFam" id="3.20.20.70:FF:000174">
    <property type="entry name" value="Transaldolase type"/>
    <property type="match status" value="1"/>
</dbReference>
<dbReference type="Gene3D" id="3.20.20.70">
    <property type="entry name" value="Aldolase class I"/>
    <property type="match status" value="1"/>
</dbReference>
<dbReference type="HAMAP" id="MF_00493">
    <property type="entry name" value="Transaldolase_2"/>
    <property type="match status" value="1"/>
</dbReference>
<dbReference type="InterPro" id="IPR013785">
    <property type="entry name" value="Aldolase_TIM"/>
</dbReference>
<dbReference type="InterPro" id="IPR001585">
    <property type="entry name" value="TAL/FSA"/>
</dbReference>
<dbReference type="InterPro" id="IPR004732">
    <property type="entry name" value="Transaldolase_2"/>
</dbReference>
<dbReference type="InterPro" id="IPR018225">
    <property type="entry name" value="Transaldolase_AS"/>
</dbReference>
<dbReference type="NCBIfam" id="NF002881">
    <property type="entry name" value="PRK03343.1"/>
    <property type="match status" value="1"/>
</dbReference>
<dbReference type="NCBIfam" id="TIGR00876">
    <property type="entry name" value="tal_mycobact"/>
    <property type="match status" value="1"/>
</dbReference>
<dbReference type="PANTHER" id="PTHR10683">
    <property type="entry name" value="TRANSALDOLASE"/>
    <property type="match status" value="1"/>
</dbReference>
<dbReference type="PANTHER" id="PTHR10683:SF31">
    <property type="entry name" value="TRANSALDOLASE"/>
    <property type="match status" value="1"/>
</dbReference>
<dbReference type="Pfam" id="PF00923">
    <property type="entry name" value="TAL_FSA"/>
    <property type="match status" value="1"/>
</dbReference>
<dbReference type="PIRSF" id="PIRSF036915">
    <property type="entry name" value="Trnald_Bac_Plnt"/>
    <property type="match status" value="1"/>
</dbReference>
<dbReference type="SUPFAM" id="SSF51569">
    <property type="entry name" value="Aldolase"/>
    <property type="match status" value="1"/>
</dbReference>
<dbReference type="PROSITE" id="PS01054">
    <property type="entry name" value="TRANSALDOLASE_1"/>
    <property type="match status" value="1"/>
</dbReference>
<dbReference type="PROSITE" id="PS00958">
    <property type="entry name" value="TRANSALDOLASE_2"/>
    <property type="match status" value="1"/>
</dbReference>
<comment type="function">
    <text evidence="1">Transaldolase is important for the balance of metabolites in the pentose-phosphate pathway.</text>
</comment>
<comment type="catalytic activity">
    <reaction>
        <text>D-sedoheptulose 7-phosphate + D-glyceraldehyde 3-phosphate = D-erythrose 4-phosphate + beta-D-fructose 6-phosphate</text>
        <dbReference type="Rhea" id="RHEA:17053"/>
        <dbReference type="ChEBI" id="CHEBI:16897"/>
        <dbReference type="ChEBI" id="CHEBI:57483"/>
        <dbReference type="ChEBI" id="CHEBI:57634"/>
        <dbReference type="ChEBI" id="CHEBI:59776"/>
        <dbReference type="EC" id="2.2.1.2"/>
    </reaction>
</comment>
<comment type="pathway">
    <text>Carbohydrate degradation; pentose phosphate pathway; D-glyceraldehyde 3-phosphate and beta-D-fructose 6-phosphate from D-ribose 5-phosphate and D-xylulose 5-phosphate (non-oxidative stage): step 2/3.</text>
</comment>
<comment type="subcellular location">
    <subcellularLocation>
        <location evidence="1">Cytoplasm</location>
    </subcellularLocation>
</comment>
<comment type="similarity">
    <text evidence="2">Belongs to the transaldolase family. Type 2 subfamily.</text>
</comment>